<evidence type="ECO:0000255" key="1">
    <source>
        <dbReference type="HAMAP-Rule" id="MF_00532"/>
    </source>
</evidence>
<evidence type="ECO:0000305" key="2"/>
<reference key="1">
    <citation type="submission" date="2008-01" db="EMBL/GenBank/DDBJ databases">
        <title>Complete sequence of chromosome of Caulobacter sp. K31.</title>
        <authorList>
            <consortium name="US DOE Joint Genome Institute"/>
            <person name="Copeland A."/>
            <person name="Lucas S."/>
            <person name="Lapidus A."/>
            <person name="Barry K."/>
            <person name="Glavina del Rio T."/>
            <person name="Dalin E."/>
            <person name="Tice H."/>
            <person name="Pitluck S."/>
            <person name="Bruce D."/>
            <person name="Goodwin L."/>
            <person name="Thompson L.S."/>
            <person name="Brettin T."/>
            <person name="Detter J.C."/>
            <person name="Han C."/>
            <person name="Schmutz J."/>
            <person name="Larimer F."/>
            <person name="Land M."/>
            <person name="Hauser L."/>
            <person name="Kyrpides N."/>
            <person name="Kim E."/>
            <person name="Stephens C."/>
            <person name="Richardson P."/>
        </authorList>
    </citation>
    <scope>NUCLEOTIDE SEQUENCE [LARGE SCALE GENOMIC DNA]</scope>
    <source>
        <strain>K31</strain>
    </source>
</reference>
<proteinExistence type="inferred from homology"/>
<organism>
    <name type="scientific">Caulobacter sp. (strain K31)</name>
    <dbReference type="NCBI Taxonomy" id="366602"/>
    <lineage>
        <taxon>Bacteria</taxon>
        <taxon>Pseudomonadati</taxon>
        <taxon>Pseudomonadota</taxon>
        <taxon>Alphaproteobacteria</taxon>
        <taxon>Caulobacterales</taxon>
        <taxon>Caulobacteraceae</taxon>
        <taxon>Caulobacter</taxon>
    </lineage>
</organism>
<name>RS9_CAUSK</name>
<dbReference type="EMBL" id="CP000927">
    <property type="protein sequence ID" value="ABZ72152.1"/>
    <property type="molecule type" value="Genomic_DNA"/>
</dbReference>
<dbReference type="SMR" id="B0T0S3"/>
<dbReference type="STRING" id="366602.Caul_3025"/>
<dbReference type="KEGG" id="cak:Caul_3025"/>
<dbReference type="eggNOG" id="COG0103">
    <property type="taxonomic scope" value="Bacteria"/>
</dbReference>
<dbReference type="HOGENOM" id="CLU_046483_2_0_5"/>
<dbReference type="OrthoDB" id="9803965at2"/>
<dbReference type="GO" id="GO:0022627">
    <property type="term" value="C:cytosolic small ribosomal subunit"/>
    <property type="evidence" value="ECO:0007669"/>
    <property type="project" value="TreeGrafter"/>
</dbReference>
<dbReference type="GO" id="GO:0003723">
    <property type="term" value="F:RNA binding"/>
    <property type="evidence" value="ECO:0007669"/>
    <property type="project" value="TreeGrafter"/>
</dbReference>
<dbReference type="GO" id="GO:0003735">
    <property type="term" value="F:structural constituent of ribosome"/>
    <property type="evidence" value="ECO:0007669"/>
    <property type="project" value="InterPro"/>
</dbReference>
<dbReference type="GO" id="GO:0006412">
    <property type="term" value="P:translation"/>
    <property type="evidence" value="ECO:0007669"/>
    <property type="project" value="UniProtKB-UniRule"/>
</dbReference>
<dbReference type="FunFam" id="3.30.230.10:FF:000001">
    <property type="entry name" value="30S ribosomal protein S9"/>
    <property type="match status" value="1"/>
</dbReference>
<dbReference type="Gene3D" id="3.30.230.10">
    <property type="match status" value="1"/>
</dbReference>
<dbReference type="HAMAP" id="MF_00532_B">
    <property type="entry name" value="Ribosomal_uS9_B"/>
    <property type="match status" value="1"/>
</dbReference>
<dbReference type="InterPro" id="IPR020568">
    <property type="entry name" value="Ribosomal_Su5_D2-typ_SF"/>
</dbReference>
<dbReference type="InterPro" id="IPR000754">
    <property type="entry name" value="Ribosomal_uS9"/>
</dbReference>
<dbReference type="InterPro" id="IPR023035">
    <property type="entry name" value="Ribosomal_uS9_bac/plastid"/>
</dbReference>
<dbReference type="InterPro" id="IPR014721">
    <property type="entry name" value="Ribsml_uS5_D2-typ_fold_subgr"/>
</dbReference>
<dbReference type="NCBIfam" id="NF001099">
    <property type="entry name" value="PRK00132.1"/>
    <property type="match status" value="1"/>
</dbReference>
<dbReference type="PANTHER" id="PTHR21569">
    <property type="entry name" value="RIBOSOMAL PROTEIN S9"/>
    <property type="match status" value="1"/>
</dbReference>
<dbReference type="PANTHER" id="PTHR21569:SF1">
    <property type="entry name" value="SMALL RIBOSOMAL SUBUNIT PROTEIN US9M"/>
    <property type="match status" value="1"/>
</dbReference>
<dbReference type="Pfam" id="PF00380">
    <property type="entry name" value="Ribosomal_S9"/>
    <property type="match status" value="1"/>
</dbReference>
<dbReference type="SUPFAM" id="SSF54211">
    <property type="entry name" value="Ribosomal protein S5 domain 2-like"/>
    <property type="match status" value="1"/>
</dbReference>
<feature type="chain" id="PRO_1000081806" description="Small ribosomal subunit protein uS9">
    <location>
        <begin position="1"/>
        <end position="157"/>
    </location>
</feature>
<comment type="similarity">
    <text evidence="1">Belongs to the universal ribosomal protein uS9 family.</text>
</comment>
<gene>
    <name evidence="1" type="primary">rpsI</name>
    <name type="ordered locus">Caul_3025</name>
</gene>
<sequence length="157" mass="17149">MSEAQGFDALASLSSNPEAAAPAVQKIDAQGRAYATGKRKNAIARVWIKPGKGSITINGRDQEVYFARPVLRMMIAQPLQVTDREGQFDIVVTVEGSGLSGQAGAVRHGLSKALTYYEPGLRAALKPHGFLTRDSRVVERKKYGKAKARRSFQFSKR</sequence>
<protein>
    <recommendedName>
        <fullName evidence="1">Small ribosomal subunit protein uS9</fullName>
    </recommendedName>
    <alternativeName>
        <fullName evidence="2">30S ribosomal protein S9</fullName>
    </alternativeName>
</protein>
<keyword id="KW-0687">Ribonucleoprotein</keyword>
<keyword id="KW-0689">Ribosomal protein</keyword>
<accession>B0T0S3</accession>